<feature type="chain" id="PRO_0000134201" description="Small ribosomal subunit protein uS2">
    <location>
        <begin position="1"/>
        <end position="294"/>
    </location>
</feature>
<feature type="helix" evidence="2">
    <location>
        <begin position="20"/>
        <end position="26"/>
    </location>
</feature>
<feature type="turn" evidence="2">
    <location>
        <begin position="27"/>
        <end position="29"/>
    </location>
</feature>
<feature type="helix" evidence="2">
    <location>
        <begin position="39"/>
        <end position="41"/>
    </location>
</feature>
<feature type="helix" evidence="2">
    <location>
        <begin position="58"/>
        <end position="77"/>
    </location>
</feature>
<feature type="strand" evidence="2">
    <location>
        <begin position="82"/>
        <end position="85"/>
    </location>
</feature>
<feature type="helix" evidence="2">
    <location>
        <begin position="90"/>
        <end position="102"/>
    </location>
</feature>
<feature type="strand" evidence="2">
    <location>
        <begin position="106"/>
        <end position="108"/>
    </location>
</feature>
<feature type="turn" evidence="2">
    <location>
        <begin position="114"/>
        <end position="119"/>
    </location>
</feature>
<feature type="helix" evidence="2">
    <location>
        <begin position="120"/>
        <end position="139"/>
    </location>
</feature>
<feature type="helix" evidence="2">
    <location>
        <begin position="142"/>
        <end position="144"/>
    </location>
</feature>
<feature type="helix" evidence="2">
    <location>
        <begin position="147"/>
        <end position="163"/>
    </location>
</feature>
<feature type="turn" evidence="2">
    <location>
        <begin position="164"/>
        <end position="168"/>
    </location>
</feature>
<feature type="strand" evidence="2">
    <location>
        <begin position="174"/>
        <end position="179"/>
    </location>
</feature>
<feature type="turn" evidence="2">
    <location>
        <begin position="181"/>
        <end position="184"/>
    </location>
</feature>
<feature type="helix" evidence="2">
    <location>
        <begin position="185"/>
        <end position="193"/>
    </location>
</feature>
<feature type="strand" evidence="2">
    <location>
        <begin position="198"/>
        <end position="200"/>
    </location>
</feature>
<feature type="strand" evidence="2">
    <location>
        <begin position="204"/>
        <end position="206"/>
    </location>
</feature>
<feature type="turn" evidence="2">
    <location>
        <begin position="208"/>
        <end position="210"/>
    </location>
</feature>
<feature type="strand" evidence="2">
    <location>
        <begin position="212"/>
        <end position="214"/>
    </location>
</feature>
<feature type="helix" evidence="2">
    <location>
        <begin position="224"/>
        <end position="239"/>
    </location>
</feature>
<feature type="helix" evidence="2">
    <location>
        <begin position="251"/>
        <end position="254"/>
    </location>
</feature>
<reference key="1">
    <citation type="journal article" date="1996" name="Nucleic Acids Res.">
        <title>Complete sequence analysis of the genome of the bacterium Mycoplasma pneumoniae.</title>
        <authorList>
            <person name="Himmelreich R."/>
            <person name="Hilbert H."/>
            <person name="Plagens H."/>
            <person name="Pirkl E."/>
            <person name="Li B.-C."/>
            <person name="Herrmann R."/>
        </authorList>
    </citation>
    <scope>NUCLEOTIDE SEQUENCE [LARGE SCALE GENOMIC DNA]</scope>
    <source>
        <strain>ATCC 29342 / M129 / Subtype 1</strain>
    </source>
</reference>
<protein>
    <recommendedName>
        <fullName evidence="1">Small ribosomal subunit protein uS2</fullName>
    </recommendedName>
    <alternativeName>
        <fullName>30S ribosomal protein S2</fullName>
    </alternativeName>
</protein>
<sequence>MSELITTPVETTAKAELVSLAKLGEMRTHVGMVKRYWNPKMGFFIEPERKHNNDHFVLELQRQSLQTAYNYVKEVAQNNGQILFVGTKNDYVKKLVNNIAKRVDVAFITQRWLGGTLTNFKTLSISINKLNKLVEKQAENAADLTKKENLMLSREIERLEKFFGGVKSLKRLPNLLIVDDPVYEKNAVAEANILRIPVVALCNTNTNPELVDFIIPANNHQPQSTCLLMNLLADAVAEAKAMPTMFAYKPDEEIQIEIPQKQEAPRQVVNRANSKQITSQRLNITRNPEVLTRE</sequence>
<gene>
    <name type="primary">rpsB</name>
    <name type="ordered locus">MPN_208</name>
    <name type="ORF">MP623</name>
</gene>
<evidence type="ECO:0000305" key="1"/>
<evidence type="ECO:0007829" key="2">
    <source>
        <dbReference type="PDB" id="8P6P"/>
    </source>
</evidence>
<organism>
    <name type="scientific">Mycoplasma pneumoniae (strain ATCC 29342 / M129 / Subtype 1)</name>
    <name type="common">Mycoplasmoides pneumoniae</name>
    <dbReference type="NCBI Taxonomy" id="272634"/>
    <lineage>
        <taxon>Bacteria</taxon>
        <taxon>Bacillati</taxon>
        <taxon>Mycoplasmatota</taxon>
        <taxon>Mycoplasmoidales</taxon>
        <taxon>Mycoplasmoidaceae</taxon>
        <taxon>Mycoplasmoides</taxon>
    </lineage>
</organism>
<keyword id="KW-0002">3D-structure</keyword>
<keyword id="KW-1185">Reference proteome</keyword>
<keyword id="KW-0687">Ribonucleoprotein</keyword>
<keyword id="KW-0689">Ribosomal protein</keyword>
<proteinExistence type="evidence at protein level"/>
<dbReference type="EMBL" id="U00089">
    <property type="protein sequence ID" value="AAB96271.1"/>
    <property type="molecule type" value="Genomic_DNA"/>
</dbReference>
<dbReference type="PIR" id="S73949">
    <property type="entry name" value="S73949"/>
</dbReference>
<dbReference type="RefSeq" id="NP_109896.1">
    <property type="nucleotide sequence ID" value="NC_000912.1"/>
</dbReference>
<dbReference type="RefSeq" id="WP_010874565.1">
    <property type="nucleotide sequence ID" value="NZ_OU342337.1"/>
</dbReference>
<dbReference type="PDB" id="7OOC">
    <property type="method" value="EM"/>
    <property type="resolution" value="3.70 A"/>
    <property type="chains" value="A=1-294"/>
</dbReference>
<dbReference type="PDB" id="7P6Z">
    <property type="method" value="EM"/>
    <property type="resolution" value="3.50 A"/>
    <property type="chains" value="A=1-294"/>
</dbReference>
<dbReference type="PDB" id="7PAH">
    <property type="method" value="EM"/>
    <property type="resolution" value="9.50 A"/>
    <property type="chains" value="A=1-294"/>
</dbReference>
<dbReference type="PDB" id="7PAI">
    <property type="method" value="EM"/>
    <property type="resolution" value="6.70 A"/>
    <property type="chains" value="A=1-294"/>
</dbReference>
<dbReference type="PDB" id="7PAJ">
    <property type="method" value="EM"/>
    <property type="resolution" value="7.30 A"/>
    <property type="chains" value="A=1-294"/>
</dbReference>
<dbReference type="PDB" id="7PAK">
    <property type="method" value="EM"/>
    <property type="resolution" value="5.30 A"/>
    <property type="chains" value="A=1-294"/>
</dbReference>
<dbReference type="PDB" id="7PAL">
    <property type="method" value="EM"/>
    <property type="resolution" value="4.70 A"/>
    <property type="chains" value="A=1-294"/>
</dbReference>
<dbReference type="PDB" id="7PAM">
    <property type="method" value="EM"/>
    <property type="resolution" value="6.80 A"/>
    <property type="chains" value="A=1-294"/>
</dbReference>
<dbReference type="PDB" id="7PAN">
    <property type="method" value="EM"/>
    <property type="resolution" value="9.70 A"/>
    <property type="chains" value="A=1-294"/>
</dbReference>
<dbReference type="PDB" id="7PAO">
    <property type="method" value="EM"/>
    <property type="resolution" value="7.00 A"/>
    <property type="chains" value="A=1-294"/>
</dbReference>
<dbReference type="PDB" id="7PAQ">
    <property type="method" value="EM"/>
    <property type="resolution" value="8.90 A"/>
    <property type="chains" value="A=1-294"/>
</dbReference>
<dbReference type="PDB" id="7PAR">
    <property type="method" value="EM"/>
    <property type="resolution" value="8.20 A"/>
    <property type="chains" value="A=1-294"/>
</dbReference>
<dbReference type="PDB" id="7PAS">
    <property type="method" value="EM"/>
    <property type="resolution" value="16.00 A"/>
    <property type="chains" value="A=1-294"/>
</dbReference>
<dbReference type="PDB" id="7PH9">
    <property type="method" value="EM"/>
    <property type="resolution" value="8.70 A"/>
    <property type="chains" value="A=1-294"/>
</dbReference>
<dbReference type="PDB" id="7PHA">
    <property type="method" value="EM"/>
    <property type="resolution" value="8.50 A"/>
    <property type="chains" value="A=1-294"/>
</dbReference>
<dbReference type="PDB" id="7PHB">
    <property type="method" value="EM"/>
    <property type="resolution" value="4.90 A"/>
    <property type="chains" value="A=1-294"/>
</dbReference>
<dbReference type="PDB" id="7PHC">
    <property type="method" value="EM"/>
    <property type="resolution" value="9.90 A"/>
    <property type="chains" value="A=1-294"/>
</dbReference>
<dbReference type="PDB" id="7PI8">
    <property type="method" value="EM"/>
    <property type="resolution" value="8.90 A"/>
    <property type="chains" value="A=1-294"/>
</dbReference>
<dbReference type="PDB" id="7PI9">
    <property type="method" value="EM"/>
    <property type="resolution" value="6.30 A"/>
    <property type="chains" value="A=1-294"/>
</dbReference>
<dbReference type="PDB" id="7PIA">
    <property type="method" value="EM"/>
    <property type="resolution" value="13.60 A"/>
    <property type="chains" value="A=1-294"/>
</dbReference>
<dbReference type="PDB" id="7PIB">
    <property type="method" value="EM"/>
    <property type="resolution" value="4.70 A"/>
    <property type="chains" value="A=1-294"/>
</dbReference>
<dbReference type="PDB" id="7PIC">
    <property type="method" value="EM"/>
    <property type="resolution" value="9.10 A"/>
    <property type="chains" value="A=1-294"/>
</dbReference>
<dbReference type="PDB" id="7PIO">
    <property type="method" value="EM"/>
    <property type="resolution" value="9.50 A"/>
    <property type="chains" value="A=1-294"/>
</dbReference>
<dbReference type="PDB" id="7PIP">
    <property type="method" value="EM"/>
    <property type="resolution" value="9.30 A"/>
    <property type="chains" value="A=1-294"/>
</dbReference>
<dbReference type="PDB" id="7PIQ">
    <property type="method" value="EM"/>
    <property type="resolution" value="9.70 A"/>
    <property type="chains" value="A=1-294"/>
</dbReference>
<dbReference type="PDB" id="7PIR">
    <property type="method" value="EM"/>
    <property type="resolution" value="12.10 A"/>
    <property type="chains" value="A=1-294"/>
</dbReference>
<dbReference type="PDB" id="7PIS">
    <property type="method" value="EM"/>
    <property type="resolution" value="15.00 A"/>
    <property type="chains" value="A=1-294"/>
</dbReference>
<dbReference type="PDB" id="7PIT">
    <property type="method" value="EM"/>
    <property type="resolution" value="5.70 A"/>
    <property type="chains" value="A=1-294"/>
</dbReference>
<dbReference type="PDB" id="8P6P">
    <property type="method" value="EM"/>
    <property type="resolution" value="3.20 A"/>
    <property type="chains" value="A=1-294"/>
</dbReference>
<dbReference type="PDB" id="8P7X">
    <property type="method" value="EM"/>
    <property type="resolution" value="3.03 A"/>
    <property type="chains" value="A=1-294"/>
</dbReference>
<dbReference type="PDB" id="8P7Y">
    <property type="method" value="EM"/>
    <property type="resolution" value="3.70 A"/>
    <property type="chains" value="A=1-294"/>
</dbReference>
<dbReference type="PDB" id="8P8V">
    <property type="method" value="EM"/>
    <property type="resolution" value="8.70 A"/>
    <property type="chains" value="A=1-294"/>
</dbReference>
<dbReference type="PDB" id="8P8W">
    <property type="method" value="EM"/>
    <property type="resolution" value="8.70 A"/>
    <property type="chains" value="A=1-294"/>
</dbReference>
<dbReference type="PDBsum" id="7OOC"/>
<dbReference type="PDBsum" id="7P6Z"/>
<dbReference type="PDBsum" id="7PAH"/>
<dbReference type="PDBsum" id="7PAI"/>
<dbReference type="PDBsum" id="7PAJ"/>
<dbReference type="PDBsum" id="7PAK"/>
<dbReference type="PDBsum" id="7PAL"/>
<dbReference type="PDBsum" id="7PAM"/>
<dbReference type="PDBsum" id="7PAN"/>
<dbReference type="PDBsum" id="7PAO"/>
<dbReference type="PDBsum" id="7PAQ"/>
<dbReference type="PDBsum" id="7PAR"/>
<dbReference type="PDBsum" id="7PAS"/>
<dbReference type="PDBsum" id="7PH9"/>
<dbReference type="PDBsum" id="7PHA"/>
<dbReference type="PDBsum" id="7PHB"/>
<dbReference type="PDBsum" id="7PHC"/>
<dbReference type="PDBsum" id="7PI8"/>
<dbReference type="PDBsum" id="7PI9"/>
<dbReference type="PDBsum" id="7PIA"/>
<dbReference type="PDBsum" id="7PIB"/>
<dbReference type="PDBsum" id="7PIC"/>
<dbReference type="PDBsum" id="7PIO"/>
<dbReference type="PDBsum" id="7PIP"/>
<dbReference type="PDBsum" id="7PIQ"/>
<dbReference type="PDBsum" id="7PIR"/>
<dbReference type="PDBsum" id="7PIS"/>
<dbReference type="PDBsum" id="7PIT"/>
<dbReference type="PDBsum" id="8P6P"/>
<dbReference type="PDBsum" id="8P7X"/>
<dbReference type="PDBsum" id="8P7Y"/>
<dbReference type="PDBsum" id="8P8V"/>
<dbReference type="PDBsum" id="8P8W"/>
<dbReference type="EMDB" id="EMD-13234"/>
<dbReference type="EMDB" id="EMD-13272"/>
<dbReference type="EMDB" id="EMD-13273"/>
<dbReference type="EMDB" id="EMD-13274"/>
<dbReference type="EMDB" id="EMD-13275"/>
<dbReference type="EMDB" id="EMD-13276"/>
<dbReference type="EMDB" id="EMD-13277"/>
<dbReference type="EMDB" id="EMD-13278"/>
<dbReference type="EMDB" id="EMD-13279"/>
<dbReference type="EMDB" id="EMD-13280"/>
<dbReference type="EMDB" id="EMD-13281"/>
<dbReference type="EMDB" id="EMD-13282"/>
<dbReference type="EMDB" id="EMD-13410"/>
<dbReference type="EMDB" id="EMD-13411"/>
<dbReference type="EMDB" id="EMD-13412"/>
<dbReference type="EMDB" id="EMD-13413"/>
<dbReference type="EMDB" id="EMD-13432"/>
<dbReference type="EMDB" id="EMD-13433"/>
<dbReference type="EMDB" id="EMD-13434"/>
<dbReference type="EMDB" id="EMD-13435"/>
<dbReference type="EMDB" id="EMD-13436"/>
<dbReference type="EMDB" id="EMD-13445"/>
<dbReference type="EMDB" id="EMD-13446"/>
<dbReference type="EMDB" id="EMD-13447"/>
<dbReference type="EMDB" id="EMD-13448"/>
<dbReference type="EMDB" id="EMD-13449"/>
<dbReference type="EMDB" id="EMD-13450"/>
<dbReference type="SMR" id="P75560"/>
<dbReference type="IntAct" id="P75560">
    <property type="interactions" value="7"/>
</dbReference>
<dbReference type="STRING" id="272634.MPN_208"/>
<dbReference type="EnsemblBacteria" id="AAB96271">
    <property type="protein sequence ID" value="AAB96271"/>
    <property type="gene ID" value="MPN_208"/>
</dbReference>
<dbReference type="KEGG" id="mpn:MPN_208"/>
<dbReference type="PATRIC" id="fig|272634.6.peg.227"/>
<dbReference type="HOGENOM" id="CLU_040318_0_0_14"/>
<dbReference type="OrthoDB" id="9808036at2"/>
<dbReference type="BioCyc" id="MPNE272634:G1GJ3-338-MONOMER"/>
<dbReference type="Proteomes" id="UP000000808">
    <property type="component" value="Chromosome"/>
</dbReference>
<dbReference type="GO" id="GO:0022627">
    <property type="term" value="C:cytosolic small ribosomal subunit"/>
    <property type="evidence" value="ECO:0007669"/>
    <property type="project" value="TreeGrafter"/>
</dbReference>
<dbReference type="GO" id="GO:0003735">
    <property type="term" value="F:structural constituent of ribosome"/>
    <property type="evidence" value="ECO:0007669"/>
    <property type="project" value="InterPro"/>
</dbReference>
<dbReference type="GO" id="GO:0006412">
    <property type="term" value="P:translation"/>
    <property type="evidence" value="ECO:0007669"/>
    <property type="project" value="UniProtKB-UniRule"/>
</dbReference>
<dbReference type="CDD" id="cd01425">
    <property type="entry name" value="RPS2"/>
    <property type="match status" value="1"/>
</dbReference>
<dbReference type="FunFam" id="1.10.287.610:FF:000001">
    <property type="entry name" value="30S ribosomal protein S2"/>
    <property type="match status" value="1"/>
</dbReference>
<dbReference type="Gene3D" id="3.40.50.10490">
    <property type="entry name" value="Glucose-6-phosphate isomerase like protein, domain 1"/>
    <property type="match status" value="1"/>
</dbReference>
<dbReference type="Gene3D" id="1.10.287.610">
    <property type="entry name" value="Helix hairpin bin"/>
    <property type="match status" value="1"/>
</dbReference>
<dbReference type="HAMAP" id="MF_00291_B">
    <property type="entry name" value="Ribosomal_uS2_B"/>
    <property type="match status" value="1"/>
</dbReference>
<dbReference type="InterPro" id="IPR001865">
    <property type="entry name" value="Ribosomal_uS2"/>
</dbReference>
<dbReference type="InterPro" id="IPR005706">
    <property type="entry name" value="Ribosomal_uS2_bac/mit/plastid"/>
</dbReference>
<dbReference type="InterPro" id="IPR018130">
    <property type="entry name" value="Ribosomal_uS2_CS"/>
</dbReference>
<dbReference type="InterPro" id="IPR023591">
    <property type="entry name" value="Ribosomal_uS2_flav_dom_sf"/>
</dbReference>
<dbReference type="NCBIfam" id="TIGR01011">
    <property type="entry name" value="rpsB_bact"/>
    <property type="match status" value="1"/>
</dbReference>
<dbReference type="PANTHER" id="PTHR12534">
    <property type="entry name" value="30S RIBOSOMAL PROTEIN S2 PROKARYOTIC AND ORGANELLAR"/>
    <property type="match status" value="1"/>
</dbReference>
<dbReference type="PANTHER" id="PTHR12534:SF0">
    <property type="entry name" value="SMALL RIBOSOMAL SUBUNIT PROTEIN US2M"/>
    <property type="match status" value="1"/>
</dbReference>
<dbReference type="Pfam" id="PF00318">
    <property type="entry name" value="Ribosomal_S2"/>
    <property type="match status" value="1"/>
</dbReference>
<dbReference type="PRINTS" id="PR00395">
    <property type="entry name" value="RIBOSOMALS2"/>
</dbReference>
<dbReference type="SUPFAM" id="SSF52313">
    <property type="entry name" value="Ribosomal protein S2"/>
    <property type="match status" value="1"/>
</dbReference>
<dbReference type="PROSITE" id="PS00963">
    <property type="entry name" value="RIBOSOMAL_S2_2"/>
    <property type="match status" value="1"/>
</dbReference>
<accession>P75560</accession>
<name>RS2_MYCPN</name>
<comment type="similarity">
    <text evidence="1">Belongs to the universal ribosomal protein uS2 family.</text>
</comment>